<protein>
    <recommendedName>
        <fullName>Multiple stress resistance protein BhsA</fullName>
    </recommendedName>
    <alternativeName>
        <fullName>Copper-induced outer membrane component</fullName>
    </alternativeName>
</protein>
<evidence type="ECO:0000250" key="1"/>
<evidence type="ECO:0000255" key="2"/>
<evidence type="ECO:0000305" key="3"/>
<accession>P0AB42</accession>
<accession>P75953</accession>
<gene>
    <name type="primary">bhsA</name>
    <name type="synonym">comC</name>
    <name type="ordered locus">Z1751</name>
    <name type="ordered locus">ECs1490</name>
</gene>
<name>BHSA_ECO57</name>
<sequence>MKNVKTLIAAAILSSMSFASFAAVEVQSTPEGQQKVGTISANAGTNLGSLEEQLAQKADEMGAKSFRITSVTGPNTLHGTAVIYK</sequence>
<dbReference type="EMBL" id="AE005174">
    <property type="protein sequence ID" value="AAG55858.1"/>
    <property type="molecule type" value="Genomic_DNA"/>
</dbReference>
<dbReference type="EMBL" id="BA000007">
    <property type="protein sequence ID" value="BAB34913.1"/>
    <property type="molecule type" value="Genomic_DNA"/>
</dbReference>
<dbReference type="PIR" id="B90815">
    <property type="entry name" value="B90815"/>
</dbReference>
<dbReference type="PIR" id="F85674">
    <property type="entry name" value="F85674"/>
</dbReference>
<dbReference type="RefSeq" id="NP_309517.1">
    <property type="nucleotide sequence ID" value="NC_002695.1"/>
</dbReference>
<dbReference type="RefSeq" id="WP_000800153.1">
    <property type="nucleotide sequence ID" value="NZ_VOAI01000018.1"/>
</dbReference>
<dbReference type="SMR" id="P0AB42"/>
<dbReference type="STRING" id="155864.Z1751"/>
<dbReference type="GeneID" id="75203698"/>
<dbReference type="GeneID" id="912348"/>
<dbReference type="KEGG" id="ece:Z1751"/>
<dbReference type="KEGG" id="ecs:ECs_1490"/>
<dbReference type="PATRIC" id="fig|386585.9.peg.1591"/>
<dbReference type="eggNOG" id="ENOG5032ZBU">
    <property type="taxonomic scope" value="Bacteria"/>
</dbReference>
<dbReference type="HOGENOM" id="CLU_158602_2_3_6"/>
<dbReference type="OMA" id="IQYPQGQ"/>
<dbReference type="Proteomes" id="UP000000558">
    <property type="component" value="Chromosome"/>
</dbReference>
<dbReference type="Proteomes" id="UP000002519">
    <property type="component" value="Chromosome"/>
</dbReference>
<dbReference type="GO" id="GO:0009279">
    <property type="term" value="C:cell outer membrane"/>
    <property type="evidence" value="ECO:0007669"/>
    <property type="project" value="UniProtKB-SubCell"/>
</dbReference>
<dbReference type="FunFam" id="3.30.1660.10:FF:000001">
    <property type="entry name" value="Multiple stress resistance protein BhsA"/>
    <property type="match status" value="1"/>
</dbReference>
<dbReference type="Gene3D" id="3.30.1660.10">
    <property type="entry name" value="Flavin-binding protein dodecin"/>
    <property type="match status" value="1"/>
</dbReference>
<dbReference type="InterPro" id="IPR051096">
    <property type="entry name" value="BhsA/McbA_stress_biofilm_assoc"/>
</dbReference>
<dbReference type="InterPro" id="IPR025543">
    <property type="entry name" value="Dodecin-like"/>
</dbReference>
<dbReference type="InterPro" id="IPR036275">
    <property type="entry name" value="YdgH-like_sf"/>
</dbReference>
<dbReference type="InterPro" id="IPR010854">
    <property type="entry name" value="YdgH/BhsA/McbA-like_dom"/>
</dbReference>
<dbReference type="NCBIfam" id="NF047859">
    <property type="entry name" value="StressCuResBhsA"/>
    <property type="match status" value="1"/>
</dbReference>
<dbReference type="PANTHER" id="PTHR34156:SF10">
    <property type="entry name" value="MULTIPLE STRESS RESISTANCE PROTEIN BHSA"/>
    <property type="match status" value="1"/>
</dbReference>
<dbReference type="PANTHER" id="PTHR34156">
    <property type="entry name" value="OUTER MEMBRANE PROTEIN-RELATED-RELATED"/>
    <property type="match status" value="1"/>
</dbReference>
<dbReference type="Pfam" id="PF07338">
    <property type="entry name" value="YdgH_BhsA-like"/>
    <property type="match status" value="1"/>
</dbReference>
<dbReference type="SUPFAM" id="SSF159871">
    <property type="entry name" value="YdgH-like"/>
    <property type="match status" value="1"/>
</dbReference>
<comment type="function">
    <text evidence="1">Reduces the permeability of the outer membrane to copper. May be involved in the regulation of biofilm formation (By similarity).</text>
</comment>
<comment type="subcellular location">
    <subcellularLocation>
        <location evidence="1">Cell outer membrane</location>
    </subcellularLocation>
</comment>
<comment type="similarity">
    <text evidence="3">Belongs to the BhsA/McbA family.</text>
</comment>
<feature type="signal peptide" evidence="2">
    <location>
        <begin position="1"/>
        <end position="22"/>
    </location>
</feature>
<feature type="chain" id="PRO_0000042572" description="Multiple stress resistance protein BhsA">
    <location>
        <begin position="23"/>
        <end position="85"/>
    </location>
</feature>
<reference key="1">
    <citation type="journal article" date="2001" name="Nature">
        <title>Genome sequence of enterohaemorrhagic Escherichia coli O157:H7.</title>
        <authorList>
            <person name="Perna N.T."/>
            <person name="Plunkett G. III"/>
            <person name="Burland V."/>
            <person name="Mau B."/>
            <person name="Glasner J.D."/>
            <person name="Rose D.J."/>
            <person name="Mayhew G.F."/>
            <person name="Evans P.S."/>
            <person name="Gregor J."/>
            <person name="Kirkpatrick H.A."/>
            <person name="Posfai G."/>
            <person name="Hackett J."/>
            <person name="Klink S."/>
            <person name="Boutin A."/>
            <person name="Shao Y."/>
            <person name="Miller L."/>
            <person name="Grotbeck E.J."/>
            <person name="Davis N.W."/>
            <person name="Lim A."/>
            <person name="Dimalanta E.T."/>
            <person name="Potamousis K."/>
            <person name="Apodaca J."/>
            <person name="Anantharaman T.S."/>
            <person name="Lin J."/>
            <person name="Yen G."/>
            <person name="Schwartz D.C."/>
            <person name="Welch R.A."/>
            <person name="Blattner F.R."/>
        </authorList>
    </citation>
    <scope>NUCLEOTIDE SEQUENCE [LARGE SCALE GENOMIC DNA]</scope>
    <source>
        <strain>O157:H7 / EDL933 / ATCC 700927 / EHEC</strain>
    </source>
</reference>
<reference key="2">
    <citation type="journal article" date="2001" name="DNA Res.">
        <title>Complete genome sequence of enterohemorrhagic Escherichia coli O157:H7 and genomic comparison with a laboratory strain K-12.</title>
        <authorList>
            <person name="Hayashi T."/>
            <person name="Makino K."/>
            <person name="Ohnishi M."/>
            <person name="Kurokawa K."/>
            <person name="Ishii K."/>
            <person name="Yokoyama K."/>
            <person name="Han C.-G."/>
            <person name="Ohtsubo E."/>
            <person name="Nakayama K."/>
            <person name="Murata T."/>
            <person name="Tanaka M."/>
            <person name="Tobe T."/>
            <person name="Iida T."/>
            <person name="Takami H."/>
            <person name="Honda T."/>
            <person name="Sasakawa C."/>
            <person name="Ogasawara N."/>
            <person name="Yasunaga T."/>
            <person name="Kuhara S."/>
            <person name="Shiba T."/>
            <person name="Hattori M."/>
            <person name="Shinagawa H."/>
        </authorList>
    </citation>
    <scope>NUCLEOTIDE SEQUENCE [LARGE SCALE GENOMIC DNA]</scope>
    <source>
        <strain>O157:H7 / Sakai / RIMD 0509952 / EHEC</strain>
    </source>
</reference>
<keyword id="KW-0998">Cell outer membrane</keyword>
<keyword id="KW-0186">Copper</keyword>
<keyword id="KW-0472">Membrane</keyword>
<keyword id="KW-1185">Reference proteome</keyword>
<keyword id="KW-0732">Signal</keyword>
<organism>
    <name type="scientific">Escherichia coli O157:H7</name>
    <dbReference type="NCBI Taxonomy" id="83334"/>
    <lineage>
        <taxon>Bacteria</taxon>
        <taxon>Pseudomonadati</taxon>
        <taxon>Pseudomonadota</taxon>
        <taxon>Gammaproteobacteria</taxon>
        <taxon>Enterobacterales</taxon>
        <taxon>Enterobacteriaceae</taxon>
        <taxon>Escherichia</taxon>
    </lineage>
</organism>
<proteinExistence type="inferred from homology"/>